<protein>
    <recommendedName>
        <fullName evidence="1">Tol-Pal system protein TolB</fullName>
    </recommendedName>
</protein>
<sequence length="430" mass="46166">MKQAFRVALGFFLLWASVLHAEVRIEITQGVDTARPIGVVPFKWAGPGAAPEDIGGIVAADLRNSGKFNPLDTSRLPQQPATASEVTPPAWTALGIDAVVVGQVQPSAAGSYVVSYQLVDTSGNPGSILAQNQFKVARKWLRYAAHTASDETFEKLTGIKGAFRTRIAYVVQTNGGQYRYELRVADYDGFNQTPVHRSPQPLMSPAWSPDGSKLAYVTFESGRSALVIQTLDSGAIRQVASFPQHNGAPAFSPDGSKLAFVLSKTGNMNLYVMDLGSGQVRQVTEGRSNNTEPSWFPDSQTLAYTSDQGGRPQVYKTNINGGTPQRLSWEGSQNQNADVSPDGKFLVMVSTNNGAQHIAKLDLATNAVQVLTDTFLDETPSVAPNGTMVIYSATQGLGSVLQLVSTDGRFKARLPATDGQVKNPAWSPYL</sequence>
<proteinExistence type="inferred from homology"/>
<name>TOLB_SODGM</name>
<keyword id="KW-0131">Cell cycle</keyword>
<keyword id="KW-0132">Cell division</keyword>
<keyword id="KW-0574">Periplasm</keyword>
<keyword id="KW-0732">Signal</keyword>
<comment type="function">
    <text evidence="1">Part of the Tol-Pal system, which plays a role in outer membrane invagination during cell division and is important for maintaining outer membrane integrity. TolB occupies a key intermediary position in the Tol-Pal system because it communicates directly with both membrane-embedded components, Pal in the outer membrane and TolA in the inner membrane.</text>
</comment>
<comment type="subunit">
    <text evidence="1">The Tol-Pal system is composed of five core proteins: the inner membrane proteins TolA, TolQ and TolR, the periplasmic protein TolB and the outer membrane protein Pal. They form a network linking the inner and outer membranes and the peptidoglycan layer.</text>
</comment>
<comment type="subcellular location">
    <subcellularLocation>
        <location evidence="1">Periplasm</location>
    </subcellularLocation>
</comment>
<comment type="similarity">
    <text evidence="1">Belongs to the TolB family.</text>
</comment>
<accession>Q2NUL4</accession>
<reference key="1">
    <citation type="journal article" date="2006" name="Genome Res.">
        <title>Massive genome erosion and functional adaptations provide insights into the symbiotic lifestyle of Sodalis glossinidius in the tsetse host.</title>
        <authorList>
            <person name="Toh H."/>
            <person name="Weiss B.L."/>
            <person name="Perkin S.A.H."/>
            <person name="Yamashita A."/>
            <person name="Oshima K."/>
            <person name="Hattori M."/>
            <person name="Aksoy S."/>
        </authorList>
    </citation>
    <scope>NUCLEOTIDE SEQUENCE [LARGE SCALE GENOMIC DNA]</scope>
    <source>
        <strain>morsitans</strain>
    </source>
</reference>
<evidence type="ECO:0000255" key="1">
    <source>
        <dbReference type="HAMAP-Rule" id="MF_00671"/>
    </source>
</evidence>
<dbReference type="EMBL" id="AP008232">
    <property type="protein sequence ID" value="BAE74161.1"/>
    <property type="molecule type" value="Genomic_DNA"/>
</dbReference>
<dbReference type="RefSeq" id="WP_011410723.1">
    <property type="nucleotide sequence ID" value="NC_007712.1"/>
</dbReference>
<dbReference type="SMR" id="Q2NUL4"/>
<dbReference type="STRING" id="343509.SG0886"/>
<dbReference type="KEGG" id="sgl:SG0886"/>
<dbReference type="eggNOG" id="COG0823">
    <property type="taxonomic scope" value="Bacteria"/>
</dbReference>
<dbReference type="HOGENOM" id="CLU_047123_0_0_6"/>
<dbReference type="OrthoDB" id="9802240at2"/>
<dbReference type="BioCyc" id="SGLO343509:SGP1_RS07570-MONOMER"/>
<dbReference type="Proteomes" id="UP000001932">
    <property type="component" value="Chromosome"/>
</dbReference>
<dbReference type="GO" id="GO:0042597">
    <property type="term" value="C:periplasmic space"/>
    <property type="evidence" value="ECO:0007669"/>
    <property type="project" value="UniProtKB-SubCell"/>
</dbReference>
<dbReference type="GO" id="GO:0051301">
    <property type="term" value="P:cell division"/>
    <property type="evidence" value="ECO:0007669"/>
    <property type="project" value="UniProtKB-UniRule"/>
</dbReference>
<dbReference type="GO" id="GO:0017038">
    <property type="term" value="P:protein import"/>
    <property type="evidence" value="ECO:0007669"/>
    <property type="project" value="InterPro"/>
</dbReference>
<dbReference type="FunFam" id="2.120.10.30:FF:000022">
    <property type="entry name" value="Tol-Pal system protein TolB"/>
    <property type="match status" value="1"/>
</dbReference>
<dbReference type="Gene3D" id="2.120.10.30">
    <property type="entry name" value="TolB, C-terminal domain"/>
    <property type="match status" value="1"/>
</dbReference>
<dbReference type="Gene3D" id="3.40.50.10070">
    <property type="entry name" value="TolB, N-terminal domain"/>
    <property type="match status" value="1"/>
</dbReference>
<dbReference type="HAMAP" id="MF_00671">
    <property type="entry name" value="TolB"/>
    <property type="match status" value="1"/>
</dbReference>
<dbReference type="InterPro" id="IPR011042">
    <property type="entry name" value="6-blade_b-propeller_TolB-like"/>
</dbReference>
<dbReference type="InterPro" id="IPR011659">
    <property type="entry name" value="PD40"/>
</dbReference>
<dbReference type="InterPro" id="IPR014167">
    <property type="entry name" value="Tol-Pal_TolB"/>
</dbReference>
<dbReference type="InterPro" id="IPR007195">
    <property type="entry name" value="TolB_N"/>
</dbReference>
<dbReference type="NCBIfam" id="TIGR02800">
    <property type="entry name" value="propeller_TolB"/>
    <property type="match status" value="1"/>
</dbReference>
<dbReference type="PANTHER" id="PTHR36842:SF1">
    <property type="entry name" value="PROTEIN TOLB"/>
    <property type="match status" value="1"/>
</dbReference>
<dbReference type="PANTHER" id="PTHR36842">
    <property type="entry name" value="PROTEIN TOLB HOMOLOG"/>
    <property type="match status" value="1"/>
</dbReference>
<dbReference type="Pfam" id="PF07676">
    <property type="entry name" value="PD40"/>
    <property type="match status" value="4"/>
</dbReference>
<dbReference type="Pfam" id="PF04052">
    <property type="entry name" value="TolB_N"/>
    <property type="match status" value="1"/>
</dbReference>
<dbReference type="SUPFAM" id="SSF52964">
    <property type="entry name" value="TolB, N-terminal domain"/>
    <property type="match status" value="1"/>
</dbReference>
<dbReference type="SUPFAM" id="SSF69304">
    <property type="entry name" value="Tricorn protease N-terminal domain"/>
    <property type="match status" value="1"/>
</dbReference>
<feature type="signal peptide" evidence="1">
    <location>
        <begin position="1"/>
        <end position="21"/>
    </location>
</feature>
<feature type="chain" id="PRO_0000259092" description="Tol-Pal system protein TolB" evidence="1">
    <location>
        <begin position="22"/>
        <end position="430"/>
    </location>
</feature>
<gene>
    <name evidence="1" type="primary">tolB</name>
    <name type="ordered locus">SG0886</name>
</gene>
<organism>
    <name type="scientific">Sodalis glossinidius (strain morsitans)</name>
    <dbReference type="NCBI Taxonomy" id="343509"/>
    <lineage>
        <taxon>Bacteria</taxon>
        <taxon>Pseudomonadati</taxon>
        <taxon>Pseudomonadota</taxon>
        <taxon>Gammaproteobacteria</taxon>
        <taxon>Enterobacterales</taxon>
        <taxon>Bruguierivoracaceae</taxon>
        <taxon>Sodalis</taxon>
    </lineage>
</organism>